<reference key="1">
    <citation type="journal article" date="1998" name="FEMS Microbiol. Lett.">
        <title>Isolation and characterization of toluene-sensitive mutants from Pseudomonas putida IH-2000.</title>
        <authorList>
            <person name="Hirayama H."/>
            <person name="Takami H."/>
            <person name="Inoue A."/>
            <person name="Horikoshi K."/>
        </authorList>
    </citation>
    <scope>NUCLEOTIDE SEQUENCE [GENOMIC DNA]</scope>
    <source>
        <strain>IH-2000</strain>
    </source>
</reference>
<dbReference type="EMBL" id="AB016787">
    <property type="protein sequence ID" value="BAA76359.1"/>
    <property type="molecule type" value="Genomic_DNA"/>
</dbReference>
<dbReference type="SMR" id="Q9WWR4"/>
<dbReference type="eggNOG" id="COG3125">
    <property type="taxonomic scope" value="Bacteria"/>
</dbReference>
<dbReference type="GO" id="GO:0009319">
    <property type="term" value="C:cytochrome o ubiquinol oxidase complex"/>
    <property type="evidence" value="ECO:0007669"/>
    <property type="project" value="TreeGrafter"/>
</dbReference>
<dbReference type="GO" id="GO:0005886">
    <property type="term" value="C:plasma membrane"/>
    <property type="evidence" value="ECO:0007669"/>
    <property type="project" value="UniProtKB-SubCell"/>
</dbReference>
<dbReference type="GO" id="GO:0009486">
    <property type="term" value="F:cytochrome bo3 ubiquinol oxidase activity"/>
    <property type="evidence" value="ECO:0007669"/>
    <property type="project" value="InterPro"/>
</dbReference>
<dbReference type="GO" id="GO:0015078">
    <property type="term" value="F:proton transmembrane transporter activity"/>
    <property type="evidence" value="ECO:0007669"/>
    <property type="project" value="TreeGrafter"/>
</dbReference>
<dbReference type="GO" id="GO:0019646">
    <property type="term" value="P:aerobic electron transport chain"/>
    <property type="evidence" value="ECO:0007669"/>
    <property type="project" value="TreeGrafter"/>
</dbReference>
<dbReference type="GO" id="GO:0015990">
    <property type="term" value="P:electron transport coupled proton transport"/>
    <property type="evidence" value="ECO:0007669"/>
    <property type="project" value="InterPro"/>
</dbReference>
<dbReference type="InterPro" id="IPR005171">
    <property type="entry name" value="Cyt_c_oxidase_su4_prok"/>
</dbReference>
<dbReference type="InterPro" id="IPR014210">
    <property type="entry name" value="Cyt_o_ubiqinol_oxidase_su4"/>
</dbReference>
<dbReference type="InterPro" id="IPR050968">
    <property type="entry name" value="Cytochrome_c_oxidase_bac_sub4"/>
</dbReference>
<dbReference type="NCBIfam" id="TIGR02847">
    <property type="entry name" value="CyoD"/>
    <property type="match status" value="1"/>
</dbReference>
<dbReference type="PANTHER" id="PTHR36835">
    <property type="entry name" value="CYTOCHROME BO(3) UBIQUINOL OXIDASE SUBUNIT 4"/>
    <property type="match status" value="1"/>
</dbReference>
<dbReference type="PANTHER" id="PTHR36835:SF1">
    <property type="entry name" value="CYTOCHROME BO(3) UBIQUINOL OXIDASE SUBUNIT 4"/>
    <property type="match status" value="1"/>
</dbReference>
<dbReference type="Pfam" id="PF03626">
    <property type="entry name" value="COX4_pro"/>
    <property type="match status" value="1"/>
</dbReference>
<organism>
    <name type="scientific">Pseudomonas putida</name>
    <name type="common">Arthrobacter siderocapsulatus</name>
    <dbReference type="NCBI Taxonomy" id="303"/>
    <lineage>
        <taxon>Bacteria</taxon>
        <taxon>Pseudomonadati</taxon>
        <taxon>Pseudomonadota</taxon>
        <taxon>Gammaproteobacteria</taxon>
        <taxon>Pseudomonadales</taxon>
        <taxon>Pseudomonadaceae</taxon>
        <taxon>Pseudomonas</taxon>
    </lineage>
</organism>
<proteinExistence type="inferred from homology"/>
<evidence type="ECO:0000250" key="1"/>
<evidence type="ECO:0000255" key="2"/>
<evidence type="ECO:0000305" key="3"/>
<sequence length="110" mass="12376">MANAHDTHHEGNHGSVKSYMIGFILSIILTAIPFGLAMSPSLPKNLTVLIIVAMAVIQVVVHLVYFLHMDRSKEQRNNVWTFLFTTLVIALLVGLSLWIMFSIHFEMLAK</sequence>
<name>CYOD_PSEPU</name>
<protein>
    <recommendedName>
        <fullName>Cytochrome bo(3) ubiquinol oxidase subunit 4</fullName>
    </recommendedName>
    <alternativeName>
        <fullName>Cytochrome o ubiquinol oxidase subunit 4</fullName>
        <shortName>Cytochrome o subunit 4</shortName>
    </alternativeName>
    <alternativeName>
        <fullName>Oxidase bo(3) subunit 4</fullName>
    </alternativeName>
    <alternativeName>
        <fullName>Ubiquinol oxidase polypeptide IV</fullName>
    </alternativeName>
    <alternativeName>
        <fullName>Ubiquinol oxidase subunit 4</fullName>
    </alternativeName>
</protein>
<feature type="chain" id="PRO_0000183916" description="Cytochrome bo(3) ubiquinol oxidase subunit 4">
    <location>
        <begin position="1"/>
        <end position="110"/>
    </location>
</feature>
<feature type="topological domain" description="Cytoplasmic" evidence="2">
    <location>
        <begin position="1"/>
        <end position="18"/>
    </location>
</feature>
<feature type="transmembrane region" description="Helical" evidence="2">
    <location>
        <begin position="19"/>
        <end position="39"/>
    </location>
</feature>
<feature type="topological domain" description="Periplasmic" evidence="2">
    <location>
        <begin position="40"/>
        <end position="46"/>
    </location>
</feature>
<feature type="transmembrane region" description="Helical" evidence="2">
    <location>
        <begin position="47"/>
        <end position="67"/>
    </location>
</feature>
<feature type="topological domain" description="Cytoplasmic" evidence="2">
    <location>
        <begin position="68"/>
        <end position="78"/>
    </location>
</feature>
<feature type="transmembrane region" description="Helical" evidence="2">
    <location>
        <begin position="79"/>
        <end position="99"/>
    </location>
</feature>
<feature type="topological domain" description="Periplasmic" evidence="2">
    <location>
        <begin position="100"/>
        <end position="110"/>
    </location>
</feature>
<accession>Q9WWR4</accession>
<comment type="function">
    <text evidence="1">Cytochrome bo(3) ubiquinol terminal oxidase is the component of the aerobic respiratory chain of E.coli that predominates when cells are grown at high aeration. Has proton pump activity across the membrane in addition to electron transfer, pumping 2 protons/electron (By similarity).</text>
</comment>
<comment type="subunit">
    <text evidence="1">Heterooctamer of two A chains, two B chains, two C chains and two D chains.</text>
</comment>
<comment type="subcellular location">
    <subcellularLocation>
        <location evidence="1">Cell inner membrane</location>
        <topology evidence="1">Multi-pass membrane protein</topology>
    </subcellularLocation>
</comment>
<comment type="similarity">
    <text evidence="3">Belongs to the cytochrome c oxidase bacterial subunit 4 family.</text>
</comment>
<gene>
    <name type="primary">cyoD</name>
</gene>
<keyword id="KW-0997">Cell inner membrane</keyword>
<keyword id="KW-1003">Cell membrane</keyword>
<keyword id="KW-0249">Electron transport</keyword>
<keyword id="KW-0472">Membrane</keyword>
<keyword id="KW-0560">Oxidoreductase</keyword>
<keyword id="KW-0812">Transmembrane</keyword>
<keyword id="KW-1133">Transmembrane helix</keyword>
<keyword id="KW-0813">Transport</keyword>